<proteinExistence type="predicted"/>
<name>CTL2B_MOUSE</name>
<dbReference type="EMBL" id="X15592">
    <property type="protein sequence ID" value="CAA33615.1"/>
    <property type="status" value="ALT_INIT"/>
    <property type="molecule type" value="mRNA"/>
</dbReference>
<dbReference type="EMBL" id="AY034578">
    <property type="protein sequence ID" value="AAK58454.1"/>
    <property type="status" value="ALT_INIT"/>
    <property type="molecule type" value="mRNA"/>
</dbReference>
<dbReference type="EMBL" id="AY034581">
    <property type="protein sequence ID" value="AAK58457.1"/>
    <property type="status" value="ALT_INIT"/>
    <property type="molecule type" value="Genomic_DNA"/>
</dbReference>
<dbReference type="EMBL" id="AK150917">
    <property type="protein sequence ID" value="BAE29955.1"/>
    <property type="molecule type" value="mRNA"/>
</dbReference>
<dbReference type="CCDS" id="CCDS49289.1"/>
<dbReference type="PIR" id="S04925">
    <property type="entry name" value="S04925"/>
</dbReference>
<dbReference type="RefSeq" id="NP_001139273.1">
    <property type="nucleotide sequence ID" value="NM_001145801.1"/>
</dbReference>
<dbReference type="RefSeq" id="NP_001415412.1">
    <property type="nucleotide sequence ID" value="NM_001428483.1"/>
</dbReference>
<dbReference type="RefSeq" id="NP_031823.1">
    <property type="nucleotide sequence ID" value="NM_007797.2"/>
</dbReference>
<dbReference type="RefSeq" id="XP_011242774.1">
    <property type="nucleotide sequence ID" value="XM_011244472.1"/>
</dbReference>
<dbReference type="SMR" id="P12400"/>
<dbReference type="FunCoup" id="P12400">
    <property type="interactions" value="3"/>
</dbReference>
<dbReference type="STRING" id="10090.ENSMUSP00000021884"/>
<dbReference type="MEROPS" id="I29.002"/>
<dbReference type="MEROPS" id="I29.008"/>
<dbReference type="iPTMnet" id="P12400"/>
<dbReference type="PhosphoSitePlus" id="P12400"/>
<dbReference type="PaxDb" id="10090-ENSMUSP00000021884"/>
<dbReference type="PeptideAtlas" id="P12400"/>
<dbReference type="ProteomicsDB" id="277918"/>
<dbReference type="Ensembl" id="ENSMUST00000021884.10">
    <property type="protein sequence ID" value="ENSMUSP00000021884.9"/>
    <property type="gene ID" value="ENSMUSG00000074874.11"/>
</dbReference>
<dbReference type="GeneID" id="13025"/>
<dbReference type="KEGG" id="mmu:13025"/>
<dbReference type="UCSC" id="uc007qvt.2">
    <property type="organism name" value="mouse"/>
</dbReference>
<dbReference type="AGR" id="MGI:88555"/>
<dbReference type="CTD" id="13025"/>
<dbReference type="MGI" id="MGI:88555">
    <property type="gene designation" value="Ctla2b"/>
</dbReference>
<dbReference type="VEuPathDB" id="HostDB:ENSMUSG00000074874"/>
<dbReference type="eggNOG" id="KOG1543">
    <property type="taxonomic scope" value="Eukaryota"/>
</dbReference>
<dbReference type="GeneTree" id="ENSGT00940000153321"/>
<dbReference type="HOGENOM" id="CLU_2145035_0_0_1"/>
<dbReference type="InParanoid" id="P12400"/>
<dbReference type="OMA" id="EWEEWKM"/>
<dbReference type="OrthoDB" id="5855924at2759"/>
<dbReference type="PhylomeDB" id="P12400"/>
<dbReference type="TreeFam" id="TF343918"/>
<dbReference type="BioGRID-ORCS" id="13025">
    <property type="hits" value="0 hits in 55 CRISPR screens"/>
</dbReference>
<dbReference type="ChiTaRS" id="Ctla2b">
    <property type="organism name" value="mouse"/>
</dbReference>
<dbReference type="PRO" id="PR:P12400"/>
<dbReference type="Proteomes" id="UP000000589">
    <property type="component" value="Chromosome 13"/>
</dbReference>
<dbReference type="RNAct" id="P12400">
    <property type="molecule type" value="protein"/>
</dbReference>
<dbReference type="Bgee" id="ENSMUSG00000074874">
    <property type="expression patterns" value="Expressed in ectoplacental cone and 50 other cell types or tissues"/>
</dbReference>
<dbReference type="ExpressionAtlas" id="P12400">
    <property type="expression patterns" value="baseline and differential"/>
</dbReference>
<dbReference type="GO" id="GO:0004869">
    <property type="term" value="F:cysteine-type endopeptidase inhibitor activity"/>
    <property type="evidence" value="ECO:0000304"/>
    <property type="project" value="MGI"/>
</dbReference>
<dbReference type="FunFam" id="1.10.287.2250:FF:000003">
    <property type="entry name" value="Cathepsin L"/>
    <property type="match status" value="1"/>
</dbReference>
<dbReference type="Gene3D" id="1.10.287.2250">
    <property type="match status" value="1"/>
</dbReference>
<dbReference type="InterPro" id="IPR038765">
    <property type="entry name" value="Papain-like_cys_pep_sf"/>
</dbReference>
<dbReference type="InterPro" id="IPR013201">
    <property type="entry name" value="Prot_inhib_I29"/>
</dbReference>
<dbReference type="Pfam" id="PF08246">
    <property type="entry name" value="Inhibitor_I29"/>
    <property type="match status" value="1"/>
</dbReference>
<dbReference type="SMART" id="SM00848">
    <property type="entry name" value="Inhibitor_I29"/>
    <property type="match status" value="1"/>
</dbReference>
<dbReference type="SUPFAM" id="SSF54001">
    <property type="entry name" value="Cysteine proteinases"/>
    <property type="match status" value="1"/>
</dbReference>
<accession>P12400</accession>
<accession>Q3UBK9</accession>
<accession>Q541S2</accession>
<gene>
    <name type="primary">Ctla2b</name>
</gene>
<keyword id="KW-1185">Reference proteome</keyword>
<keyword id="KW-0677">Repeat</keyword>
<evidence type="ECO:0000305" key="1"/>
<feature type="chain" id="PRO_0000026486" description="Protein CTLA-2-beta">
    <location>
        <begin position="1"/>
        <end position="113"/>
    </location>
</feature>
<feature type="repeat" description="1">
    <location>
        <begin position="15"/>
        <end position="17"/>
    </location>
</feature>
<feature type="repeat" description="2">
    <location>
        <begin position="18"/>
        <end position="20"/>
    </location>
</feature>
<feature type="region of interest" description="2 X 3 AA tandem repeats of E-W-K">
    <location>
        <begin position="15"/>
        <end position="20"/>
    </location>
</feature>
<feature type="sequence conflict" description="In Ref. 3; BAE29955." evidence="1" ref="3">
    <original>PE</original>
    <variation>V</variation>
    <location>
        <begin position="112"/>
        <end position="113"/>
    </location>
</feature>
<sequence>MMSAAPSPDPSLDNEWKEWKTTFAKAYSLDEERHRRLMWEENKKKIEAHNADYERGKTSFYMGLNQFSDLTPEEFRTNCCGSSMCRGEMAPDLPEYEDLGKNSYLTPGRAQPE</sequence>
<organism>
    <name type="scientific">Mus musculus</name>
    <name type="common">Mouse</name>
    <dbReference type="NCBI Taxonomy" id="10090"/>
    <lineage>
        <taxon>Eukaryota</taxon>
        <taxon>Metazoa</taxon>
        <taxon>Chordata</taxon>
        <taxon>Craniata</taxon>
        <taxon>Vertebrata</taxon>
        <taxon>Euteleostomi</taxon>
        <taxon>Mammalia</taxon>
        <taxon>Eutheria</taxon>
        <taxon>Euarchontoglires</taxon>
        <taxon>Glires</taxon>
        <taxon>Rodentia</taxon>
        <taxon>Myomorpha</taxon>
        <taxon>Muroidea</taxon>
        <taxon>Muridae</taxon>
        <taxon>Murinae</taxon>
        <taxon>Mus</taxon>
        <taxon>Mus</taxon>
    </lineage>
</organism>
<protein>
    <recommendedName>
        <fullName>Protein CTLA-2-beta</fullName>
    </recommendedName>
    <alternativeName>
        <fullName>Cytotoxic T-lymphocyte-associated protein 2-beta</fullName>
    </alternativeName>
</protein>
<reference key="1">
    <citation type="journal article" date="1989" name="Eur. J. Immunol.">
        <title>Novel structures CTLA-2 alpha and CTLA-2 beta expressed in mouse activated T cells and mast cells and homologous to cysteine proteinase proregions.</title>
        <authorList>
            <person name="Denizot F."/>
            <person name="Brunet J.-F."/>
            <person name="Roustan P."/>
            <person name="Harper K."/>
            <person name="Suzan M."/>
            <person name="Luciani M.-F."/>
            <person name="Mattei M.-G."/>
            <person name="Golstein P."/>
        </authorList>
    </citation>
    <scope>NUCLEOTIDE SEQUENCE [MRNA]</scope>
    <source>
        <strain>C57BL/10-BR</strain>
        <tissue>T-cell</tissue>
    </source>
</reference>
<reference key="2">
    <citation type="journal article" date="2002" name="Genomics">
        <title>Identification and characterization of a dense cluster of placenta-specific cysteine peptidase genes and related genes on mouse chromosome 13.</title>
        <authorList>
            <person name="Deussing J."/>
            <person name="Kouadio M."/>
            <person name="Rehman S."/>
            <person name="Werber I."/>
            <person name="Schwinde A."/>
            <person name="Peters C."/>
        </authorList>
    </citation>
    <scope>NUCLEOTIDE SEQUENCE [GENOMIC RNA / MRNA]</scope>
    <source>
        <strain>129/SvEvTacfBr</strain>
        <strain>C57BL/6J</strain>
        <tissue>Placenta</tissue>
        <tissue>Spleen</tissue>
    </source>
</reference>
<reference key="3">
    <citation type="journal article" date="2005" name="Science">
        <title>The transcriptional landscape of the mammalian genome.</title>
        <authorList>
            <person name="Carninci P."/>
            <person name="Kasukawa T."/>
            <person name="Katayama S."/>
            <person name="Gough J."/>
            <person name="Frith M.C."/>
            <person name="Maeda N."/>
            <person name="Oyama R."/>
            <person name="Ravasi T."/>
            <person name="Lenhard B."/>
            <person name="Wells C."/>
            <person name="Kodzius R."/>
            <person name="Shimokawa K."/>
            <person name="Bajic V.B."/>
            <person name="Brenner S.E."/>
            <person name="Batalov S."/>
            <person name="Forrest A.R."/>
            <person name="Zavolan M."/>
            <person name="Davis M.J."/>
            <person name="Wilming L.G."/>
            <person name="Aidinis V."/>
            <person name="Allen J.E."/>
            <person name="Ambesi-Impiombato A."/>
            <person name="Apweiler R."/>
            <person name="Aturaliya R.N."/>
            <person name="Bailey T.L."/>
            <person name="Bansal M."/>
            <person name="Baxter L."/>
            <person name="Beisel K.W."/>
            <person name="Bersano T."/>
            <person name="Bono H."/>
            <person name="Chalk A.M."/>
            <person name="Chiu K.P."/>
            <person name="Choudhary V."/>
            <person name="Christoffels A."/>
            <person name="Clutterbuck D.R."/>
            <person name="Crowe M.L."/>
            <person name="Dalla E."/>
            <person name="Dalrymple B.P."/>
            <person name="de Bono B."/>
            <person name="Della Gatta G."/>
            <person name="di Bernardo D."/>
            <person name="Down T."/>
            <person name="Engstrom P."/>
            <person name="Fagiolini M."/>
            <person name="Faulkner G."/>
            <person name="Fletcher C.F."/>
            <person name="Fukushima T."/>
            <person name="Furuno M."/>
            <person name="Futaki S."/>
            <person name="Gariboldi M."/>
            <person name="Georgii-Hemming P."/>
            <person name="Gingeras T.R."/>
            <person name="Gojobori T."/>
            <person name="Green R.E."/>
            <person name="Gustincich S."/>
            <person name="Harbers M."/>
            <person name="Hayashi Y."/>
            <person name="Hensch T.K."/>
            <person name="Hirokawa N."/>
            <person name="Hill D."/>
            <person name="Huminiecki L."/>
            <person name="Iacono M."/>
            <person name="Ikeo K."/>
            <person name="Iwama A."/>
            <person name="Ishikawa T."/>
            <person name="Jakt M."/>
            <person name="Kanapin A."/>
            <person name="Katoh M."/>
            <person name="Kawasawa Y."/>
            <person name="Kelso J."/>
            <person name="Kitamura H."/>
            <person name="Kitano H."/>
            <person name="Kollias G."/>
            <person name="Krishnan S.P."/>
            <person name="Kruger A."/>
            <person name="Kummerfeld S.K."/>
            <person name="Kurochkin I.V."/>
            <person name="Lareau L.F."/>
            <person name="Lazarevic D."/>
            <person name="Lipovich L."/>
            <person name="Liu J."/>
            <person name="Liuni S."/>
            <person name="McWilliam S."/>
            <person name="Madan Babu M."/>
            <person name="Madera M."/>
            <person name="Marchionni L."/>
            <person name="Matsuda H."/>
            <person name="Matsuzawa S."/>
            <person name="Miki H."/>
            <person name="Mignone F."/>
            <person name="Miyake S."/>
            <person name="Morris K."/>
            <person name="Mottagui-Tabar S."/>
            <person name="Mulder N."/>
            <person name="Nakano N."/>
            <person name="Nakauchi H."/>
            <person name="Ng P."/>
            <person name="Nilsson R."/>
            <person name="Nishiguchi S."/>
            <person name="Nishikawa S."/>
            <person name="Nori F."/>
            <person name="Ohara O."/>
            <person name="Okazaki Y."/>
            <person name="Orlando V."/>
            <person name="Pang K.C."/>
            <person name="Pavan W.J."/>
            <person name="Pavesi G."/>
            <person name="Pesole G."/>
            <person name="Petrovsky N."/>
            <person name="Piazza S."/>
            <person name="Reed J."/>
            <person name="Reid J.F."/>
            <person name="Ring B.Z."/>
            <person name="Ringwald M."/>
            <person name="Rost B."/>
            <person name="Ruan Y."/>
            <person name="Salzberg S.L."/>
            <person name="Sandelin A."/>
            <person name="Schneider C."/>
            <person name="Schoenbach C."/>
            <person name="Sekiguchi K."/>
            <person name="Semple C.A."/>
            <person name="Seno S."/>
            <person name="Sessa L."/>
            <person name="Sheng Y."/>
            <person name="Shibata Y."/>
            <person name="Shimada H."/>
            <person name="Shimada K."/>
            <person name="Silva D."/>
            <person name="Sinclair B."/>
            <person name="Sperling S."/>
            <person name="Stupka E."/>
            <person name="Sugiura K."/>
            <person name="Sultana R."/>
            <person name="Takenaka Y."/>
            <person name="Taki K."/>
            <person name="Tammoja K."/>
            <person name="Tan S.L."/>
            <person name="Tang S."/>
            <person name="Taylor M.S."/>
            <person name="Tegner J."/>
            <person name="Teichmann S.A."/>
            <person name="Ueda H.R."/>
            <person name="van Nimwegen E."/>
            <person name="Verardo R."/>
            <person name="Wei C.L."/>
            <person name="Yagi K."/>
            <person name="Yamanishi H."/>
            <person name="Zabarovsky E."/>
            <person name="Zhu S."/>
            <person name="Zimmer A."/>
            <person name="Hide W."/>
            <person name="Bult C."/>
            <person name="Grimmond S.M."/>
            <person name="Teasdale R.D."/>
            <person name="Liu E.T."/>
            <person name="Brusic V."/>
            <person name="Quackenbush J."/>
            <person name="Wahlestedt C."/>
            <person name="Mattick J.S."/>
            <person name="Hume D.A."/>
            <person name="Kai C."/>
            <person name="Sasaki D."/>
            <person name="Tomaru Y."/>
            <person name="Fukuda S."/>
            <person name="Kanamori-Katayama M."/>
            <person name="Suzuki M."/>
            <person name="Aoki J."/>
            <person name="Arakawa T."/>
            <person name="Iida J."/>
            <person name="Imamura K."/>
            <person name="Itoh M."/>
            <person name="Kato T."/>
            <person name="Kawaji H."/>
            <person name="Kawagashira N."/>
            <person name="Kawashima T."/>
            <person name="Kojima M."/>
            <person name="Kondo S."/>
            <person name="Konno H."/>
            <person name="Nakano K."/>
            <person name="Ninomiya N."/>
            <person name="Nishio T."/>
            <person name="Okada M."/>
            <person name="Plessy C."/>
            <person name="Shibata K."/>
            <person name="Shiraki T."/>
            <person name="Suzuki S."/>
            <person name="Tagami M."/>
            <person name="Waki K."/>
            <person name="Watahiki A."/>
            <person name="Okamura-Oho Y."/>
            <person name="Suzuki H."/>
            <person name="Kawai J."/>
            <person name="Hayashizaki Y."/>
        </authorList>
    </citation>
    <scope>NUCLEOTIDE SEQUENCE [LARGE SCALE MRNA]</scope>
    <source>
        <strain>C57BL/6J</strain>
        <tissue>Bone marrow</tissue>
    </source>
</reference>
<comment type="function">
    <text>Not known, expressed in activated T-cell.</text>
</comment>
<comment type="similarity">
    <text evidence="1">To the propeptide regions of cysteine proteases.</text>
</comment>
<comment type="sequence caution" evidence="1">
    <conflict type="erroneous initiation">
        <sequence resource="EMBL-CDS" id="AAK58454"/>
    </conflict>
</comment>
<comment type="sequence caution" evidence="1">
    <conflict type="erroneous initiation">
        <sequence resource="EMBL-CDS" id="AAK58457"/>
    </conflict>
</comment>
<comment type="sequence caution" evidence="1">
    <conflict type="erroneous initiation">
        <sequence resource="EMBL-CDS" id="CAA33615"/>
    </conflict>
</comment>